<keyword id="KW-0328">Glycosyltransferase</keyword>
<keyword id="KW-0808">Transferase</keyword>
<protein>
    <recommendedName>
        <fullName evidence="3">UDP-glycosyltransferase 2</fullName>
        <shortName evidence="3">PlUGT2</shortName>
        <ecNumber evidence="2">2.4.1.-</ecNumber>
    </recommendedName>
    <alternativeName>
        <fullName evidence="5">UDP-glucose:isoflavone 4' 7-O-glucosyltransferase</fullName>
    </alternativeName>
</protein>
<sequence length="472" mass="51875">MKDTIVLYPNIGRGHLVSMVELGKLILTHHPSLSITILILTPSTTPSTTTFACDSNAQYIATVTATIPAITFHHVPLATLPSNTPSLPPHLVSLELARHSTQNVAVAFQTLAKASNLKAIIIDLLNFNDPKTLTQNLNKNIHTYFYYTSGASTLALLLHYPTIHETLTKNYVKDQPLQIQIPGLRANITTDDFAKDSKDPSNYSSQAFLKIAETMRGSFGIIINTFEAIEEELIRALSEDGTVPPLFCIGPVISAPYGEDDKGCLSWLDSQPSQSVVLLCFGSMGSFSRTQLKEIAVGLEKSEQRFLWVVRAELDCADSVDEQPSLDELMPGGFLERTKEKGLVVRDWAPQVQILSHDSVGGFVTHCGWNSVLEAVCEGVPMAAWPLYAEQRVNRVIMVEDMKVALAVNEDKAGFVSATELGDRVRELMESDKGKEIRQRTFKMKISAAEAMAEGGTSRVALDKLAKLWKES</sequence>
<name>UGT2_PUEML</name>
<accession>A0A172J2D0</accession>
<feature type="chain" id="PRO_0000439665" description="UDP-glycosyltransferase 2">
    <location>
        <begin position="1"/>
        <end position="472"/>
    </location>
</feature>
<feature type="binding site" evidence="1">
    <location>
        <position position="283"/>
    </location>
    <ligand>
        <name>UDP-alpha-D-glucose</name>
        <dbReference type="ChEBI" id="CHEBI:58885"/>
    </ligand>
</feature>
<feature type="binding site" evidence="1">
    <location>
        <begin position="348"/>
        <end position="349"/>
    </location>
    <ligand>
        <name>UDP-alpha-D-glucose</name>
        <dbReference type="ChEBI" id="CHEBI:58885"/>
    </ligand>
</feature>
<feature type="binding site" evidence="1">
    <location>
        <begin position="366"/>
        <end position="374"/>
    </location>
    <ligand>
        <name>UDP-alpha-D-glucose</name>
        <dbReference type="ChEBI" id="CHEBI:58885"/>
    </ligand>
</feature>
<feature type="binding site" evidence="1">
    <location>
        <begin position="388"/>
        <end position="391"/>
    </location>
    <ligand>
        <name>UDP-alpha-D-glucose</name>
        <dbReference type="ChEBI" id="CHEBI:58885"/>
    </ligand>
</feature>
<organism evidence="5">
    <name type="scientific">Pueraria montana var. lobata</name>
    <name type="common">Kudzu vine</name>
    <name type="synonym">Pueraria lobata</name>
    <dbReference type="NCBI Taxonomy" id="3893"/>
    <lineage>
        <taxon>Eukaryota</taxon>
        <taxon>Viridiplantae</taxon>
        <taxon>Streptophyta</taxon>
        <taxon>Embryophyta</taxon>
        <taxon>Tracheophyta</taxon>
        <taxon>Spermatophyta</taxon>
        <taxon>Magnoliopsida</taxon>
        <taxon>eudicotyledons</taxon>
        <taxon>Gunneridae</taxon>
        <taxon>Pentapetalae</taxon>
        <taxon>rosids</taxon>
        <taxon>fabids</taxon>
        <taxon>Fabales</taxon>
        <taxon>Fabaceae</taxon>
        <taxon>Papilionoideae</taxon>
        <taxon>50 kb inversion clade</taxon>
        <taxon>NPAAA clade</taxon>
        <taxon>indigoferoid/millettioid clade</taxon>
        <taxon>Phaseoleae</taxon>
        <taxon>Pueraria</taxon>
    </lineage>
</organism>
<gene>
    <name evidence="3" type="primary">UGT2</name>
</gene>
<reference key="1">
    <citation type="journal article" date="2016" name="Front. Plant Sci.">
        <title>Molecular Cloning and Functional Characterization of a Novel (Iso)flavone 4',7-O-diglucoside Glucosyltransferase from Pueraria lobata.</title>
        <authorList>
            <person name="Wang X."/>
            <person name="Fan R."/>
            <person name="Li J."/>
            <person name="Li C."/>
            <person name="Zhang Y."/>
        </authorList>
    </citation>
    <scope>NUCLEOTIDE SEQUENCE [MRNA]</scope>
    <scope>FUNCTION</scope>
    <scope>SUBSTRATE SPECIFICITY</scope>
    <scope>TISSUE SPECIFICITY</scope>
    <source>
        <tissue>Root</tissue>
    </source>
</reference>
<dbReference type="EC" id="2.4.1.-" evidence="2"/>
<dbReference type="EMBL" id="KU311040">
    <property type="protein sequence ID" value="AMQ26112.1"/>
    <property type="molecule type" value="mRNA"/>
</dbReference>
<dbReference type="SMR" id="A0A172J2D0"/>
<dbReference type="GO" id="GO:0035251">
    <property type="term" value="F:UDP-glucosyltransferase activity"/>
    <property type="evidence" value="ECO:0007669"/>
    <property type="project" value="InterPro"/>
</dbReference>
<dbReference type="CDD" id="cd03784">
    <property type="entry name" value="GT1_Gtf-like"/>
    <property type="match status" value="1"/>
</dbReference>
<dbReference type="FunFam" id="3.40.50.2000:FF:000020">
    <property type="entry name" value="Glycosyltransferase"/>
    <property type="match status" value="1"/>
</dbReference>
<dbReference type="Gene3D" id="3.40.50.2000">
    <property type="entry name" value="Glycogen Phosphorylase B"/>
    <property type="match status" value="2"/>
</dbReference>
<dbReference type="InterPro" id="IPR050481">
    <property type="entry name" value="UDP-glycosyltransf_plant"/>
</dbReference>
<dbReference type="InterPro" id="IPR002213">
    <property type="entry name" value="UDP_glucos_trans"/>
</dbReference>
<dbReference type="InterPro" id="IPR035595">
    <property type="entry name" value="UDP_glycos_trans_CS"/>
</dbReference>
<dbReference type="PANTHER" id="PTHR48048">
    <property type="entry name" value="GLYCOSYLTRANSFERASE"/>
    <property type="match status" value="1"/>
</dbReference>
<dbReference type="PANTHER" id="PTHR48048:SF33">
    <property type="entry name" value="ISOFLAVONE 7-O-GLUCOSYLTRANSFERASE 1"/>
    <property type="match status" value="1"/>
</dbReference>
<dbReference type="Pfam" id="PF00201">
    <property type="entry name" value="UDPGT"/>
    <property type="match status" value="1"/>
</dbReference>
<dbReference type="SUPFAM" id="SSF53756">
    <property type="entry name" value="UDP-Glycosyltransferase/glycogen phosphorylase"/>
    <property type="match status" value="1"/>
</dbReference>
<dbReference type="PROSITE" id="PS00375">
    <property type="entry name" value="UDPGT"/>
    <property type="match status" value="1"/>
</dbReference>
<comment type="function">
    <text evidence="2">Glycosyltransferase that possesses isoflavonoids 4'-O- and 7-O-glucosyltransferase activities (PubMed:27066037). Shows a successive glucosylation toward the acceptors producing their corresponding 4',7-O-diglucosides (PubMed:27066037). Can use genistein, formononetin, daidzein, liquiritigenin and naringenin as substrates (PubMed:27066037). Also shows a 3'-O-glucosylation activity in vitro (PubMed:27066037).</text>
</comment>
<comment type="tissue specificity">
    <text evidence="2">Highly expressed in roots. Expressed in leaves and stems.</text>
</comment>
<comment type="similarity">
    <text evidence="4">Belongs to the UDP-glycosyltransferase family.</text>
</comment>
<evidence type="ECO:0000250" key="1">
    <source>
        <dbReference type="UniProtKB" id="Q9M156"/>
    </source>
</evidence>
<evidence type="ECO:0000269" key="2">
    <source>
    </source>
</evidence>
<evidence type="ECO:0000303" key="3">
    <source>
    </source>
</evidence>
<evidence type="ECO:0000305" key="4"/>
<evidence type="ECO:0000312" key="5">
    <source>
        <dbReference type="EMBL" id="AMQ26112.1"/>
    </source>
</evidence>
<proteinExistence type="evidence at transcript level"/>